<organism>
    <name type="scientific">Macaca fascicularis</name>
    <name type="common">Crab-eating macaque</name>
    <name type="synonym">Cynomolgus monkey</name>
    <dbReference type="NCBI Taxonomy" id="9541"/>
    <lineage>
        <taxon>Eukaryota</taxon>
        <taxon>Metazoa</taxon>
        <taxon>Chordata</taxon>
        <taxon>Craniata</taxon>
        <taxon>Vertebrata</taxon>
        <taxon>Euteleostomi</taxon>
        <taxon>Mammalia</taxon>
        <taxon>Eutheria</taxon>
        <taxon>Euarchontoglires</taxon>
        <taxon>Primates</taxon>
        <taxon>Haplorrhini</taxon>
        <taxon>Catarrhini</taxon>
        <taxon>Cercopithecidae</taxon>
        <taxon>Cercopithecinae</taxon>
        <taxon>Macaca</taxon>
    </lineage>
</organism>
<dbReference type="EMBL" id="AB154413">
    <property type="protein sequence ID" value="BAD20641.1"/>
    <property type="molecule type" value="Genomic_DNA"/>
</dbReference>
<dbReference type="EMBL" id="AY772459">
    <property type="protein sequence ID" value="AAV49126.1"/>
    <property type="molecule type" value="Genomic_DNA"/>
</dbReference>
<dbReference type="SMR" id="Q6L786"/>
<dbReference type="GlyCosmos" id="Q6L786">
    <property type="glycosylation" value="3 sites, No reported glycans"/>
</dbReference>
<dbReference type="eggNOG" id="ENOG502SNJC">
    <property type="taxonomic scope" value="Eukaryota"/>
</dbReference>
<dbReference type="Proteomes" id="UP000233100">
    <property type="component" value="Unplaced"/>
</dbReference>
<dbReference type="GO" id="GO:0005886">
    <property type="term" value="C:plasma membrane"/>
    <property type="evidence" value="ECO:0007669"/>
    <property type="project" value="UniProtKB-SubCell"/>
</dbReference>
<dbReference type="GO" id="GO:0004930">
    <property type="term" value="F:G protein-coupled receptor activity"/>
    <property type="evidence" value="ECO:0007669"/>
    <property type="project" value="UniProtKB-KW"/>
</dbReference>
<dbReference type="CDD" id="cd15108">
    <property type="entry name" value="7tmA_MrgprD"/>
    <property type="match status" value="1"/>
</dbReference>
<dbReference type="FunFam" id="1.20.1070.10:FF:000193">
    <property type="entry name" value="Mas-related G-protein coupled receptor member E"/>
    <property type="match status" value="1"/>
</dbReference>
<dbReference type="Gene3D" id="1.20.1070.10">
    <property type="entry name" value="Rhodopsin 7-helix transmembrane proteins"/>
    <property type="match status" value="1"/>
</dbReference>
<dbReference type="InterPro" id="IPR000276">
    <property type="entry name" value="GPCR_Rhodpsn"/>
</dbReference>
<dbReference type="InterPro" id="IPR017452">
    <property type="entry name" value="GPCR_Rhodpsn_7TM"/>
</dbReference>
<dbReference type="InterPro" id="IPR026232">
    <property type="entry name" value="MRGPCRD"/>
</dbReference>
<dbReference type="InterPro" id="IPR026234">
    <property type="entry name" value="MRGPCRFAMILY"/>
</dbReference>
<dbReference type="PANTHER" id="PTHR11334">
    <property type="entry name" value="MAS-RELATED G-PROTEIN COUPLED RECEPTOR"/>
    <property type="match status" value="1"/>
</dbReference>
<dbReference type="PANTHER" id="PTHR11334:SF57">
    <property type="entry name" value="MAS-RELATED G-PROTEIN COUPLED RECEPTOR MEMBER D"/>
    <property type="match status" value="1"/>
</dbReference>
<dbReference type="Pfam" id="PF00001">
    <property type="entry name" value="7tm_1"/>
    <property type="match status" value="1"/>
</dbReference>
<dbReference type="PRINTS" id="PR00237">
    <property type="entry name" value="GPCRRHODOPSN"/>
</dbReference>
<dbReference type="PRINTS" id="PR02110">
    <property type="entry name" value="MRGPCRD"/>
</dbReference>
<dbReference type="PRINTS" id="PR02108">
    <property type="entry name" value="MRGPCRFAMILY"/>
</dbReference>
<dbReference type="SUPFAM" id="SSF81321">
    <property type="entry name" value="Family A G protein-coupled receptor-like"/>
    <property type="match status" value="1"/>
</dbReference>
<dbReference type="PROSITE" id="PS50262">
    <property type="entry name" value="G_PROTEIN_RECEP_F1_2"/>
    <property type="match status" value="1"/>
</dbReference>
<gene>
    <name type="primary">MRGPRD</name>
    <name type="synonym">MRGD</name>
</gene>
<feature type="chain" id="PRO_0000069757" description="Mas-related G-protein coupled receptor member D">
    <location>
        <begin position="1"/>
        <end position="320"/>
    </location>
</feature>
<feature type="topological domain" description="Extracellular" evidence="2">
    <location>
        <begin position="1"/>
        <end position="33"/>
    </location>
</feature>
<feature type="transmembrane region" description="Helical; Name=1" evidence="2">
    <location>
        <begin position="34"/>
        <end position="54"/>
    </location>
</feature>
<feature type="topological domain" description="Cytoplasmic" evidence="2">
    <location>
        <begin position="55"/>
        <end position="62"/>
    </location>
</feature>
<feature type="transmembrane region" description="Helical; Name=2" evidence="2">
    <location>
        <begin position="63"/>
        <end position="83"/>
    </location>
</feature>
<feature type="topological domain" description="Extracellular" evidence="2">
    <location>
        <begin position="84"/>
        <end position="112"/>
    </location>
</feature>
<feature type="transmembrane region" description="Helical; Name=3" evidence="2">
    <location>
        <begin position="113"/>
        <end position="133"/>
    </location>
</feature>
<feature type="topological domain" description="Cytoplasmic" evidence="2">
    <location>
        <begin position="134"/>
        <end position="142"/>
    </location>
</feature>
<feature type="transmembrane region" description="Helical; Name=4" evidence="2">
    <location>
        <begin position="143"/>
        <end position="163"/>
    </location>
</feature>
<feature type="topological domain" description="Extracellular" evidence="2">
    <location>
        <begin position="164"/>
        <end position="182"/>
    </location>
</feature>
<feature type="transmembrane region" description="Helical; Name=5" evidence="2">
    <location>
        <begin position="183"/>
        <end position="203"/>
    </location>
</feature>
<feature type="topological domain" description="Cytoplasmic" evidence="2">
    <location>
        <begin position="204"/>
        <end position="218"/>
    </location>
</feature>
<feature type="transmembrane region" description="Helical; Name=6" evidence="2">
    <location>
        <begin position="219"/>
        <end position="239"/>
    </location>
</feature>
<feature type="topological domain" description="Extracellular" evidence="2">
    <location>
        <begin position="240"/>
        <end position="257"/>
    </location>
</feature>
<feature type="transmembrane region" description="Helical; Name=7" evidence="2">
    <location>
        <begin position="258"/>
        <end position="280"/>
    </location>
</feature>
<feature type="topological domain" description="Cytoplasmic" evidence="2">
    <location>
        <begin position="281"/>
        <end position="320"/>
    </location>
</feature>
<feature type="region of interest" description="Disordered" evidence="4">
    <location>
        <begin position="301"/>
        <end position="320"/>
    </location>
</feature>
<feature type="compositionally biased region" description="Low complexity" evidence="4">
    <location>
        <begin position="308"/>
        <end position="320"/>
    </location>
</feature>
<feature type="glycosylation site" description="N-linked (GlcNAc...) asparagine" evidence="2">
    <location>
        <position position="2"/>
    </location>
</feature>
<feature type="glycosylation site" description="N-linked (GlcNAc...) asparagine" evidence="2">
    <location>
        <position position="6"/>
    </location>
</feature>
<feature type="glycosylation site" description="N-linked (GlcNAc...) asparagine" evidence="2">
    <location>
        <position position="16"/>
    </location>
</feature>
<feature type="sequence conflict" description="In Ref. 2; AAV49126." evidence="6" ref="2">
    <original>A</original>
    <variation>V</variation>
    <location>
        <position position="70"/>
    </location>
</feature>
<feature type="sequence conflict" description="In Ref. 2; AAV49126." evidence="6" ref="2">
    <original>C</original>
    <variation>S</variation>
    <location>
        <position position="78"/>
    </location>
</feature>
<feature type="sequence conflict" description="In Ref. 2; AAV49126." evidence="6" ref="2">
    <original>Q</original>
    <variation>R</variation>
    <location>
        <position position="174"/>
    </location>
</feature>
<feature type="sequence conflict" description="In Ref. 2; AAV49126." evidence="6" ref="2">
    <original>R</original>
    <variation>Q</variation>
    <location>
        <position position="177"/>
    </location>
</feature>
<reference key="1">
    <citation type="journal article" date="2004" name="J. Biol. Chem.">
        <title>Identification of a G protein-coupled receptor specifically responsive to beta-alanine.</title>
        <authorList>
            <person name="Shinohara T."/>
            <person name="Harada M."/>
            <person name="Ogi K."/>
            <person name="Maruyama M."/>
            <person name="Fujii R."/>
            <person name="Tanaka H."/>
            <person name="Fukusumi S."/>
            <person name="Komatsu H."/>
            <person name="Hosoya M."/>
            <person name="Noguchi Y."/>
            <person name="Watanabe T."/>
            <person name="Moriya T."/>
            <person name="Itoh Y."/>
            <person name="Hinuma S."/>
        </authorList>
    </citation>
    <scope>NUCLEOTIDE SEQUENCE [GENOMIC DNA]</scope>
    <scope>TISSUE SPECIFICITY</scope>
</reference>
<reference key="2">
    <citation type="journal article" date="2005" name="Brain Res. Mol. Brain Res.">
        <title>Cloning and expression of MRG receptors in macaque, mouse, and human.</title>
        <authorList>
            <person name="Zhang L."/>
            <person name="Taylor N."/>
            <person name="Xie Y."/>
            <person name="Ford R."/>
            <person name="Johnson J."/>
            <person name="Paulsen J.E."/>
            <person name="Bates B."/>
        </authorList>
    </citation>
    <scope>NUCLEOTIDE SEQUENCE [GENOMIC DNA]</scope>
</reference>
<comment type="function">
    <text evidence="1">May regulate nociceptor function and/or development, including the sensation or modulation of pain. Functions as a specific membrane receptor for beta-alanine. The receptor couples with G-protein G(q) and G(i) (By similarity).</text>
</comment>
<comment type="subcellular location">
    <subcellularLocation>
        <location>Cell membrane</location>
        <topology>Multi-pass membrane protein</topology>
    </subcellularLocation>
</comment>
<comment type="tissue specificity">
    <text evidence="5">Co-expressed in the small diameter neurons with P2X3 and VR1 in dorsal root ganglia.</text>
</comment>
<comment type="similarity">
    <text evidence="3">Belongs to the G-protein coupled receptor 1 family. Mas subfamily.</text>
</comment>
<accession>Q6L786</accession>
<accession>Q5U9D8</accession>
<evidence type="ECO:0000250" key="1"/>
<evidence type="ECO:0000255" key="2"/>
<evidence type="ECO:0000255" key="3">
    <source>
        <dbReference type="PROSITE-ProRule" id="PRU00521"/>
    </source>
</evidence>
<evidence type="ECO:0000256" key="4">
    <source>
        <dbReference type="SAM" id="MobiDB-lite"/>
    </source>
</evidence>
<evidence type="ECO:0000269" key="5">
    <source>
    </source>
</evidence>
<evidence type="ECO:0000305" key="6"/>
<proteinExistence type="evidence at transcript level"/>
<name>MRGRD_MACFA</name>
<keyword id="KW-1003">Cell membrane</keyword>
<keyword id="KW-0297">G-protein coupled receptor</keyword>
<keyword id="KW-0325">Glycoprotein</keyword>
<keyword id="KW-0472">Membrane</keyword>
<keyword id="KW-0675">Receptor</keyword>
<keyword id="KW-1185">Reference proteome</keyword>
<keyword id="KW-0807">Transducer</keyword>
<keyword id="KW-0812">Transmembrane</keyword>
<keyword id="KW-1133">Transmembrane helix</keyword>
<protein>
    <recommendedName>
        <fullName>Mas-related G-protein coupled receptor member D</fullName>
    </recommendedName>
    <alternativeName>
        <fullName>Beta-alanine receptor</fullName>
    </alternativeName>
    <alternativeName>
        <fullName>G-protein coupled receptor TGR7</fullName>
    </alternativeName>
</protein>
<sequence length="320" mass="35945">MNQTLNSSGTAELALNHSRGSVVHAACLVLSSLAMFTCLCGMAGNSMVIWLLGFRMRRTPFSIYILNLAAADLLFVFCMAAMLSLETQPLVSTTDKVHELMKRLKYFAYTVGLSLLTAISTQRCLSVLFPIWFKCHRPRHLSAWVCALLWMLCLLTNGLTSCFCSKFLKFNKDQCFRVDMVQAALIMGVLTPVMTLSSLTLFVRVRRSSQQWRRQPTRLFVVVLASVLVFLICSLPLGFYWFVLYWLNLPPDTKVLYFNLSRLSSSMSSSANPLIYFLVGSRRSRRLQGSLGTVLQRALREEPELEGGETPTTGTNEMGA</sequence>